<name>COAD_HELPY</name>
<sequence length="157" mass="17668">MQKIGIYPGTFDPVTNGHIDIIHRSSELFEKLIVAVAHSSAKNPMFSLDERLKMIQLATKSFKNVECVAFEGLLANLAKEYHCKVLVRGLRVVSDFEYELQMGYANKSLNHELETLYFMPTLQNAFISSSIVRSIIAHKGDASHLVPKEIYPLISKA</sequence>
<gene>
    <name evidence="1" type="primary">coaD</name>
    <name type="synonym">kdtB</name>
    <name type="ordered locus">HP_1475</name>
</gene>
<feature type="chain" id="PRO_0000156217" description="Phosphopantetheine adenylyltransferase">
    <location>
        <begin position="1"/>
        <end position="157"/>
    </location>
</feature>
<feature type="binding site" evidence="1">
    <location>
        <begin position="10"/>
        <end position="11"/>
    </location>
    <ligand>
        <name>ATP</name>
        <dbReference type="ChEBI" id="CHEBI:30616"/>
    </ligand>
</feature>
<feature type="binding site" evidence="1 6 7">
    <location>
        <position position="10"/>
    </location>
    <ligand>
        <name>substrate</name>
    </ligand>
</feature>
<feature type="binding site" evidence="1">
    <location>
        <position position="18"/>
    </location>
    <ligand>
        <name>ATP</name>
        <dbReference type="ChEBI" id="CHEBI:30616"/>
    </ligand>
</feature>
<feature type="binding site" evidence="1 6 7">
    <location>
        <position position="42"/>
    </location>
    <ligand>
        <name>substrate</name>
    </ligand>
</feature>
<feature type="binding site" evidence="1 6 7">
    <location>
        <position position="74"/>
    </location>
    <ligand>
        <name>substrate</name>
    </ligand>
</feature>
<feature type="binding site" evidence="1">
    <location>
        <position position="88"/>
    </location>
    <ligand>
        <name>substrate</name>
    </ligand>
</feature>
<feature type="binding site" evidence="1 6 7">
    <location>
        <begin position="89"/>
        <end position="91"/>
    </location>
    <ligand>
        <name>ATP</name>
        <dbReference type="ChEBI" id="CHEBI:30616"/>
    </ligand>
</feature>
<feature type="binding site" evidence="1">
    <location>
        <position position="99"/>
    </location>
    <ligand>
        <name>ATP</name>
        <dbReference type="ChEBI" id="CHEBI:30616"/>
    </ligand>
</feature>
<feature type="binding site" evidence="1">
    <location>
        <begin position="124"/>
        <end position="130"/>
    </location>
    <ligand>
        <name>ATP</name>
        <dbReference type="ChEBI" id="CHEBI:30616"/>
    </ligand>
</feature>
<feature type="site" description="Transition state stabilizer" evidence="1">
    <location>
        <position position="18"/>
    </location>
</feature>
<feature type="mutagenesis site" description="Forms a domain-swapped homotetramer; when associated with Y-76." evidence="3">
    <original>I</original>
    <variation>V</variation>
    <location>
        <position position="4"/>
    </location>
</feature>
<feature type="mutagenesis site" description="Forms a domain-swapped homotetramer; when associated with V-4." evidence="3">
    <original>N</original>
    <variation>Y</variation>
    <location>
        <position position="76"/>
    </location>
</feature>
<feature type="strand" evidence="8">
    <location>
        <begin position="4"/>
        <end position="9"/>
    </location>
</feature>
<feature type="helix" evidence="8">
    <location>
        <begin position="16"/>
        <end position="26"/>
    </location>
</feature>
<feature type="strand" evidence="8">
    <location>
        <begin position="29"/>
        <end position="37"/>
    </location>
</feature>
<feature type="helix" evidence="8">
    <location>
        <begin position="40"/>
        <end position="42"/>
    </location>
</feature>
<feature type="helix" evidence="8">
    <location>
        <begin position="48"/>
        <end position="59"/>
    </location>
</feature>
<feature type="strand" evidence="8">
    <location>
        <begin position="65"/>
        <end position="70"/>
    </location>
</feature>
<feature type="helix" evidence="8">
    <location>
        <begin position="74"/>
        <end position="80"/>
    </location>
</feature>
<feature type="strand" evidence="9">
    <location>
        <begin position="85"/>
        <end position="89"/>
    </location>
</feature>
<feature type="helix" evidence="8">
    <location>
        <begin position="96"/>
        <end position="108"/>
    </location>
</feature>
<feature type="strand" evidence="9">
    <location>
        <begin position="114"/>
        <end position="118"/>
    </location>
</feature>
<feature type="helix" evidence="8">
    <location>
        <begin position="122"/>
        <end position="125"/>
    </location>
</feature>
<feature type="helix" evidence="8">
    <location>
        <begin position="129"/>
        <end position="137"/>
    </location>
</feature>
<feature type="turn" evidence="8">
    <location>
        <begin position="143"/>
        <end position="145"/>
    </location>
</feature>
<feature type="turn" evidence="8">
    <location>
        <begin position="148"/>
        <end position="150"/>
    </location>
</feature>
<feature type="helix" evidence="8">
    <location>
        <begin position="151"/>
        <end position="154"/>
    </location>
</feature>
<organism>
    <name type="scientific">Helicobacter pylori (strain ATCC 700392 / 26695)</name>
    <name type="common">Campylobacter pylori</name>
    <dbReference type="NCBI Taxonomy" id="85962"/>
    <lineage>
        <taxon>Bacteria</taxon>
        <taxon>Pseudomonadati</taxon>
        <taxon>Campylobacterota</taxon>
        <taxon>Epsilonproteobacteria</taxon>
        <taxon>Campylobacterales</taxon>
        <taxon>Helicobacteraceae</taxon>
        <taxon>Helicobacter</taxon>
    </lineage>
</organism>
<evidence type="ECO:0000255" key="1">
    <source>
        <dbReference type="HAMAP-Rule" id="MF_00151"/>
    </source>
</evidence>
<evidence type="ECO:0000269" key="2">
    <source>
    </source>
</evidence>
<evidence type="ECO:0000269" key="3">
    <source>
    </source>
</evidence>
<evidence type="ECO:0000269" key="4">
    <source>
    </source>
</evidence>
<evidence type="ECO:0000303" key="5">
    <source>
    </source>
</evidence>
<evidence type="ECO:0000305" key="6">
    <source>
    </source>
</evidence>
<evidence type="ECO:0007744" key="7">
    <source>
        <dbReference type="PDB" id="3OTW"/>
    </source>
</evidence>
<evidence type="ECO:0007829" key="8">
    <source>
        <dbReference type="PDB" id="3NV7"/>
    </source>
</evidence>
<evidence type="ECO:0007829" key="9">
    <source>
        <dbReference type="PDB" id="3OTW"/>
    </source>
</evidence>
<accession>O26010</accession>
<comment type="function">
    <text evidence="1 4">Reversibly transfers an adenylyl group from ATP to 4'-phosphopantetheine, yielding dephospho-CoA (dPCoA) and pyrophosphate.</text>
</comment>
<comment type="catalytic activity">
    <reaction evidence="1 4">
        <text>(R)-4'-phosphopantetheine + ATP + H(+) = 3'-dephospho-CoA + diphosphate</text>
        <dbReference type="Rhea" id="RHEA:19801"/>
        <dbReference type="ChEBI" id="CHEBI:15378"/>
        <dbReference type="ChEBI" id="CHEBI:30616"/>
        <dbReference type="ChEBI" id="CHEBI:33019"/>
        <dbReference type="ChEBI" id="CHEBI:57328"/>
        <dbReference type="ChEBI" id="CHEBI:61723"/>
        <dbReference type="EC" id="2.7.7.3"/>
    </reaction>
</comment>
<comment type="cofactor">
    <cofactor evidence="1">
        <name>Mg(2+)</name>
        <dbReference type="ChEBI" id="CHEBI:18420"/>
    </cofactor>
</comment>
<comment type="activity regulation">
    <text evidence="4 6">Tightly binds to CoA, which is presumably a feedback inhibitor (PubMed:21527250). Potently inhibited by D-amethopterin, which simultaneously occupies the 4'-phosphopantetheine- and ATP-binding sites; following treatment with D-amethopterin, H.pylori exhibits morphological characteristics associated with cell death, showing that D-amethopterin displays antimicrobial activity (PubMed:24040220).</text>
</comment>
<comment type="pathway">
    <text evidence="1">Cofactor biosynthesis; coenzyme A biosynthesis; CoA from (R)-pantothenate: step 4/5.</text>
</comment>
<comment type="subunit">
    <text evidence="1 2">Homohexamer.</text>
</comment>
<comment type="subcellular location">
    <subcellularLocation>
        <location evidence="1">Cytoplasm</location>
    </subcellularLocation>
</comment>
<comment type="similarity">
    <text evidence="1">Belongs to the bacterial CoaD family.</text>
</comment>
<proteinExistence type="evidence at protein level"/>
<dbReference type="EC" id="2.7.7.3" evidence="1 4"/>
<dbReference type="EMBL" id="AE000511">
    <property type="protein sequence ID" value="AAD08514.1"/>
    <property type="molecule type" value="Genomic_DNA"/>
</dbReference>
<dbReference type="PIR" id="C64704">
    <property type="entry name" value="C64704"/>
</dbReference>
<dbReference type="RefSeq" id="NP_208266.1">
    <property type="nucleotide sequence ID" value="NC_000915.1"/>
</dbReference>
<dbReference type="RefSeq" id="WP_001169234.1">
    <property type="nucleotide sequence ID" value="NC_018939.1"/>
</dbReference>
<dbReference type="PDB" id="3NV7">
    <property type="method" value="X-ray"/>
    <property type="resolution" value="1.75 A"/>
    <property type="chains" value="A=1-157"/>
</dbReference>
<dbReference type="PDB" id="3OTW">
    <property type="method" value="X-ray"/>
    <property type="resolution" value="1.80 A"/>
    <property type="chains" value="A/B/C/D/E/F=1-157"/>
</dbReference>
<dbReference type="PDB" id="8XRW">
    <property type="method" value="X-ray"/>
    <property type="resolution" value="2.20 A"/>
    <property type="chains" value="A/B/C/D/E/F/G/H/I/J/K/L=1-157"/>
</dbReference>
<dbReference type="PDB" id="8XSC">
    <property type="method" value="X-ray"/>
    <property type="resolution" value="1.96 A"/>
    <property type="chains" value="A/B=1-157"/>
</dbReference>
<dbReference type="PDB" id="8XSK">
    <property type="method" value="X-ray"/>
    <property type="resolution" value="1.98 A"/>
    <property type="chains" value="A/B=1-157"/>
</dbReference>
<dbReference type="PDB" id="8XSV">
    <property type="method" value="X-ray"/>
    <property type="resolution" value="2.00 A"/>
    <property type="chains" value="A/B/C/D/E/F=1-155"/>
</dbReference>
<dbReference type="PDBsum" id="3NV7"/>
<dbReference type="PDBsum" id="3OTW"/>
<dbReference type="PDBsum" id="8XRW"/>
<dbReference type="PDBsum" id="8XSC"/>
<dbReference type="PDBsum" id="8XSK"/>
<dbReference type="PDBsum" id="8XSV"/>
<dbReference type="SMR" id="O26010"/>
<dbReference type="FunCoup" id="O26010">
    <property type="interactions" value="313"/>
</dbReference>
<dbReference type="STRING" id="85962.HP_1475"/>
<dbReference type="PaxDb" id="85962-C694_07635"/>
<dbReference type="EnsemblBacteria" id="AAD08514">
    <property type="protein sequence ID" value="AAD08514"/>
    <property type="gene ID" value="HP_1475"/>
</dbReference>
<dbReference type="KEGG" id="heo:C694_07635"/>
<dbReference type="KEGG" id="hpy:HP_1475"/>
<dbReference type="PATRIC" id="fig|85962.47.peg.1586"/>
<dbReference type="eggNOG" id="COG0669">
    <property type="taxonomic scope" value="Bacteria"/>
</dbReference>
<dbReference type="InParanoid" id="O26010"/>
<dbReference type="OrthoDB" id="9806661at2"/>
<dbReference type="PhylomeDB" id="O26010"/>
<dbReference type="BRENDA" id="2.7.7.3">
    <property type="organism ID" value="2604"/>
</dbReference>
<dbReference type="UniPathway" id="UPA00241">
    <property type="reaction ID" value="UER00355"/>
</dbReference>
<dbReference type="EvolutionaryTrace" id="O26010"/>
<dbReference type="Proteomes" id="UP000000429">
    <property type="component" value="Chromosome"/>
</dbReference>
<dbReference type="GO" id="GO:0005737">
    <property type="term" value="C:cytoplasm"/>
    <property type="evidence" value="ECO:0007669"/>
    <property type="project" value="UniProtKB-SubCell"/>
</dbReference>
<dbReference type="GO" id="GO:0005524">
    <property type="term" value="F:ATP binding"/>
    <property type="evidence" value="ECO:0007669"/>
    <property type="project" value="UniProtKB-KW"/>
</dbReference>
<dbReference type="GO" id="GO:0004595">
    <property type="term" value="F:pantetheine-phosphate adenylyltransferase activity"/>
    <property type="evidence" value="ECO:0000318"/>
    <property type="project" value="GO_Central"/>
</dbReference>
<dbReference type="GO" id="GO:0015937">
    <property type="term" value="P:coenzyme A biosynthetic process"/>
    <property type="evidence" value="ECO:0000318"/>
    <property type="project" value="GO_Central"/>
</dbReference>
<dbReference type="CDD" id="cd02163">
    <property type="entry name" value="PPAT"/>
    <property type="match status" value="1"/>
</dbReference>
<dbReference type="Gene3D" id="3.40.50.620">
    <property type="entry name" value="HUPs"/>
    <property type="match status" value="1"/>
</dbReference>
<dbReference type="HAMAP" id="MF_00151">
    <property type="entry name" value="PPAT_bact"/>
    <property type="match status" value="1"/>
</dbReference>
<dbReference type="InterPro" id="IPR004821">
    <property type="entry name" value="Cyt_trans-like"/>
</dbReference>
<dbReference type="InterPro" id="IPR001980">
    <property type="entry name" value="PPAT"/>
</dbReference>
<dbReference type="InterPro" id="IPR014729">
    <property type="entry name" value="Rossmann-like_a/b/a_fold"/>
</dbReference>
<dbReference type="NCBIfam" id="TIGR01510">
    <property type="entry name" value="coaD_prev_kdtB"/>
    <property type="match status" value="1"/>
</dbReference>
<dbReference type="NCBIfam" id="TIGR00125">
    <property type="entry name" value="cyt_tran_rel"/>
    <property type="match status" value="1"/>
</dbReference>
<dbReference type="PANTHER" id="PTHR21342">
    <property type="entry name" value="PHOSPHOPANTETHEINE ADENYLYLTRANSFERASE"/>
    <property type="match status" value="1"/>
</dbReference>
<dbReference type="PANTHER" id="PTHR21342:SF1">
    <property type="entry name" value="PHOSPHOPANTETHEINE ADENYLYLTRANSFERASE"/>
    <property type="match status" value="1"/>
</dbReference>
<dbReference type="Pfam" id="PF01467">
    <property type="entry name" value="CTP_transf_like"/>
    <property type="match status" value="1"/>
</dbReference>
<dbReference type="PRINTS" id="PR01020">
    <property type="entry name" value="LPSBIOSNTHSS"/>
</dbReference>
<dbReference type="SUPFAM" id="SSF52374">
    <property type="entry name" value="Nucleotidylyl transferase"/>
    <property type="match status" value="1"/>
</dbReference>
<protein>
    <recommendedName>
        <fullName evidence="1 5">Phosphopantetheine adenylyltransferase</fullName>
        <ecNumber evidence="1 4">2.7.7.3</ecNumber>
    </recommendedName>
    <alternativeName>
        <fullName evidence="1">Dephospho-CoA pyrophosphorylase</fullName>
    </alternativeName>
    <alternativeName>
        <fullName evidence="1">Pantetheine-phosphate adenylyltransferase</fullName>
        <shortName evidence="1 5">PPAT</shortName>
    </alternativeName>
</protein>
<reference key="1">
    <citation type="journal article" date="1997" name="Nature">
        <title>The complete genome sequence of the gastric pathogen Helicobacter pylori.</title>
        <authorList>
            <person name="Tomb J.-F."/>
            <person name="White O."/>
            <person name="Kerlavage A.R."/>
            <person name="Clayton R.A."/>
            <person name="Sutton G.G."/>
            <person name="Fleischmann R.D."/>
            <person name="Ketchum K.A."/>
            <person name="Klenk H.-P."/>
            <person name="Gill S.R."/>
            <person name="Dougherty B.A."/>
            <person name="Nelson K.E."/>
            <person name="Quackenbush J."/>
            <person name="Zhou L."/>
            <person name="Kirkness E.F."/>
            <person name="Peterson S.N."/>
            <person name="Loftus B.J."/>
            <person name="Richardson D.L."/>
            <person name="Dodson R.J."/>
            <person name="Khalak H.G."/>
            <person name="Glodek A."/>
            <person name="McKenney K."/>
            <person name="FitzGerald L.M."/>
            <person name="Lee N."/>
            <person name="Adams M.D."/>
            <person name="Hickey E.K."/>
            <person name="Berg D.E."/>
            <person name="Gocayne J.D."/>
            <person name="Utterback T.R."/>
            <person name="Peterson J.D."/>
            <person name="Kelley J.M."/>
            <person name="Cotton M.D."/>
            <person name="Weidman J.F."/>
            <person name="Fujii C."/>
            <person name="Bowman C."/>
            <person name="Watthey L."/>
            <person name="Wallin E."/>
            <person name="Hayes W.S."/>
            <person name="Borodovsky M."/>
            <person name="Karp P.D."/>
            <person name="Smith H.O."/>
            <person name="Fraser C.M."/>
            <person name="Venter J.C."/>
        </authorList>
    </citation>
    <scope>NUCLEOTIDE SEQUENCE [LARGE SCALE GENOMIC DNA]</scope>
    <source>
        <strain>ATCC 700392 / 26695</strain>
    </source>
</reference>
<reference key="2">
    <citation type="journal article" date="2013" name="PLoS ONE">
        <title>Experimentally validated novel inhibitors of Helicobacter pylori phosphopantetheine adenylyltransferase discovered by virtual high-throughput screening.</title>
        <authorList>
            <person name="Cheng C.S."/>
            <person name="Jia K.F."/>
            <person name="Chen T."/>
            <person name="Chang S.Y."/>
            <person name="Lin M.S."/>
            <person name="Yin H.S."/>
        </authorList>
    </citation>
    <scope>FUNCTION</scope>
    <scope>CATALYTIC ACTIVITY</scope>
    <scope>ACTIVITY REGULATION</scope>
    <source>
        <strain>ATCC 700392 / 26695</strain>
    </source>
</reference>
<reference key="3">
    <citation type="journal article" date="2011" name="Biochem. Biophys. Res. Commun.">
        <title>Crystal structure and biophysical characterisation of Helicobacter pylori phosphopantetheine adenylyltransferase.</title>
        <authorList>
            <person name="Cheng C.S."/>
            <person name="Chen C.H."/>
            <person name="Luo Y.C."/>
            <person name="Chen W.T."/>
            <person name="Chang S.Y."/>
            <person name="Lyu P.C."/>
            <person name="Kao M.C."/>
            <person name="Yin H.S."/>
        </authorList>
    </citation>
    <scope>X-RAY CRYSTALLOGRAPHY (1.80 ANGSTROMS) IN COMPLEX WITH COENZYME A</scope>
    <scope>SUBUNIT</scope>
    <scope>ACTIVITY REGULATION</scope>
    <source>
        <strain>ATCC 700392 / 26695</strain>
    </source>
</reference>
<reference key="4">
    <citation type="journal article" date="2012" name="J. Biomol. Struct. Dyn.">
        <title>Substitution of asparagine 76 by a tyrosine residue induces domain swapping in Helicobacter pylori phosphopantetheine adenylyltransferase.</title>
        <authorList>
            <person name="Cheng C.S."/>
            <person name="Chen W.T."/>
            <person name="Chen Y.W."/>
            <person name="Chen C.H."/>
            <person name="Luo Y.C."/>
            <person name="Lyu P.C."/>
            <person name="Yin H.S."/>
        </authorList>
    </citation>
    <scope>X-RAY CRYSTALLOGRAPHY (1.75 ANGSTROMS) OF MUTANT VAL-4/TYR-76</scope>
    <scope>MUTAGENESIS OF 4-ILE--ASN-76</scope>
    <scope>ATP-BINDING</scope>
    <source>
        <strain>ATCC 700392 / 26695</strain>
    </source>
</reference>
<keyword id="KW-0002">3D-structure</keyword>
<keyword id="KW-0067">ATP-binding</keyword>
<keyword id="KW-0173">Coenzyme A biosynthesis</keyword>
<keyword id="KW-0963">Cytoplasm</keyword>
<keyword id="KW-0460">Magnesium</keyword>
<keyword id="KW-0547">Nucleotide-binding</keyword>
<keyword id="KW-0548">Nucleotidyltransferase</keyword>
<keyword id="KW-1185">Reference proteome</keyword>
<keyword id="KW-0808">Transferase</keyword>